<name>YMIB_ECOLI</name>
<sequence length="34" mass="4122">MTYMKLTAAKRIVFFIYLFVIQFWKNASFQTKVS</sequence>
<reference key="1">
    <citation type="journal article" date="1997" name="Science">
        <title>The complete genome sequence of Escherichia coli K-12.</title>
        <authorList>
            <person name="Blattner F.R."/>
            <person name="Plunkett G. III"/>
            <person name="Bloch C.A."/>
            <person name="Perna N.T."/>
            <person name="Burland V."/>
            <person name="Riley M."/>
            <person name="Collado-Vides J."/>
            <person name="Glasner J.D."/>
            <person name="Rode C.K."/>
            <person name="Mayhew G.F."/>
            <person name="Gregor J."/>
            <person name="Davis N.W."/>
            <person name="Kirkpatrick H.A."/>
            <person name="Goeden M.A."/>
            <person name="Rose D.J."/>
            <person name="Mau B."/>
            <person name="Shao Y."/>
        </authorList>
    </citation>
    <scope>NUCLEOTIDE SEQUENCE [LARGE SCALE GENOMIC DNA]</scope>
    <source>
        <strain>K12 / MG1655 / ATCC 47076</strain>
    </source>
</reference>
<reference key="2">
    <citation type="journal article" date="2006" name="Mol. Syst. Biol.">
        <title>Highly accurate genome sequences of Escherichia coli K-12 strains MG1655 and W3110.</title>
        <authorList>
            <person name="Hayashi K."/>
            <person name="Morooka N."/>
            <person name="Yamamoto Y."/>
            <person name="Fujita K."/>
            <person name="Isono K."/>
            <person name="Choi S."/>
            <person name="Ohtsubo E."/>
            <person name="Baba T."/>
            <person name="Wanner B.L."/>
            <person name="Mori H."/>
            <person name="Horiuchi T."/>
        </authorList>
    </citation>
    <scope>NUCLEOTIDE SEQUENCE [LARGE SCALE GENOMIC DNA]</scope>
    <source>
        <strain>K12 / W3110 / ATCC 27325 / DSM 5911</strain>
    </source>
</reference>
<proteinExistence type="predicted"/>
<gene>
    <name type="primary">ymiB</name>
    <name type="ordered locus">b4672</name>
    <name type="ordered locus">JW1278.1</name>
</gene>
<comment type="subcellular location">
    <subcellularLocation>
        <location evidence="2">Membrane</location>
        <topology evidence="2">Single-pass membrane protein</topology>
    </subcellularLocation>
</comment>
<dbReference type="EMBL" id="U00096">
    <property type="protein sequence ID" value="ACO59991.1"/>
    <property type="molecule type" value="Genomic_DNA"/>
</dbReference>
<dbReference type="EMBL" id="AP009048">
    <property type="status" value="NOT_ANNOTATED_CDS"/>
    <property type="molecule type" value="Genomic_DNA"/>
</dbReference>
<dbReference type="RefSeq" id="WP_000221855.1">
    <property type="nucleotide sequence ID" value="NZ_STEB01000005.1"/>
</dbReference>
<dbReference type="RefSeq" id="YP_002791239.1">
    <property type="nucleotide sequence ID" value="NC_000913.3"/>
</dbReference>
<dbReference type="STRING" id="511145.b4672"/>
<dbReference type="PaxDb" id="511145-b4672"/>
<dbReference type="EnsemblBacteria" id="ACO59991">
    <property type="protein sequence ID" value="ACO59991"/>
    <property type="gene ID" value="b4672"/>
</dbReference>
<dbReference type="GeneID" id="7751616"/>
<dbReference type="KEGG" id="eco:b4672"/>
<dbReference type="KEGG" id="ecoc:C3026_07550"/>
<dbReference type="PATRIC" id="fig|83333.103.peg.2095"/>
<dbReference type="InParanoid" id="C1P5Z9"/>
<dbReference type="OrthoDB" id="6572559at2"/>
<dbReference type="BioCyc" id="EcoCyc:MONOMER0-4368"/>
<dbReference type="PRO" id="PR:C1P5Z9"/>
<dbReference type="Proteomes" id="UP000000625">
    <property type="component" value="Chromosome"/>
</dbReference>
<dbReference type="GO" id="GO:0016020">
    <property type="term" value="C:membrane"/>
    <property type="evidence" value="ECO:0007669"/>
    <property type="project" value="UniProtKB-SubCell"/>
</dbReference>
<keyword id="KW-0472">Membrane</keyword>
<keyword id="KW-1185">Reference proteome</keyword>
<keyword id="KW-0812">Transmembrane</keyword>
<keyword id="KW-1133">Transmembrane helix</keyword>
<protein>
    <recommendedName>
        <fullName>Putative protein YmiB</fullName>
    </recommendedName>
</protein>
<accession>C1P5Z9</accession>
<organism>
    <name type="scientific">Escherichia coli (strain K12)</name>
    <dbReference type="NCBI Taxonomy" id="83333"/>
    <lineage>
        <taxon>Bacteria</taxon>
        <taxon>Pseudomonadati</taxon>
        <taxon>Pseudomonadota</taxon>
        <taxon>Gammaproteobacteria</taxon>
        <taxon>Enterobacterales</taxon>
        <taxon>Enterobacteriaceae</taxon>
        <taxon>Escherichia</taxon>
    </lineage>
</organism>
<feature type="chain" id="PRO_0000386419" description="Putative protein YmiB">
    <location>
        <begin position="1"/>
        <end position="34"/>
    </location>
</feature>
<feature type="transmembrane region" description="Helical" evidence="1">
    <location>
        <begin position="7"/>
        <end position="24"/>
    </location>
</feature>
<evidence type="ECO:0000255" key="1"/>
<evidence type="ECO:0000305" key="2"/>